<keyword id="KW-0217">Developmental protein</keyword>
<organism>
    <name type="scientific">Drosophila virilis</name>
    <name type="common">Fruit fly</name>
    <dbReference type="NCBI Taxonomy" id="7244"/>
    <lineage>
        <taxon>Eukaryota</taxon>
        <taxon>Metazoa</taxon>
        <taxon>Ecdysozoa</taxon>
        <taxon>Arthropoda</taxon>
        <taxon>Hexapoda</taxon>
        <taxon>Insecta</taxon>
        <taxon>Pterygota</taxon>
        <taxon>Neoptera</taxon>
        <taxon>Endopterygota</taxon>
        <taxon>Diptera</taxon>
        <taxon>Brachycera</taxon>
        <taxon>Muscomorpha</taxon>
        <taxon>Ephydroidea</taxon>
        <taxon>Drosophilidae</taxon>
        <taxon>Drosophila</taxon>
    </lineage>
</organism>
<proteinExistence type="inferred from homology"/>
<comment type="function">
    <text evidence="1">Vital for proper neuronal development and hatching.</text>
</comment>
<comment type="similarity">
    <text evidence="2">Belongs to the OAF family.</text>
</comment>
<dbReference type="EMBL" id="U95037">
    <property type="protein sequence ID" value="AAB71531.1"/>
    <property type="molecule type" value="Genomic_DNA"/>
</dbReference>
<dbReference type="EnsemblMetazoa" id="FBtr0233219">
    <property type="protein sequence ID" value="FBpp0231711"/>
    <property type="gene ID" value="FBgn0013146"/>
</dbReference>
<dbReference type="EnsemblMetazoa" id="XM_002051938.3">
    <property type="protein sequence ID" value="XP_002051974.2"/>
    <property type="gene ID" value="LOC6627530"/>
</dbReference>
<dbReference type="eggNOG" id="ENOG502QWDA">
    <property type="taxonomic scope" value="Eukaryota"/>
</dbReference>
<dbReference type="OrthoDB" id="5947176at2759"/>
<dbReference type="ChiTaRS" id="oaf">
    <property type="organism name" value="fly"/>
</dbReference>
<dbReference type="InterPro" id="IPR026315">
    <property type="entry name" value="Oaf"/>
</dbReference>
<dbReference type="InterPro" id="IPR053897">
    <property type="entry name" value="Oaf_C"/>
</dbReference>
<dbReference type="InterPro" id="IPR053894">
    <property type="entry name" value="OAF_N"/>
</dbReference>
<dbReference type="PANTHER" id="PTHR13423">
    <property type="entry name" value="OUT AT FIRST"/>
    <property type="match status" value="1"/>
</dbReference>
<dbReference type="PANTHER" id="PTHR13423:SF2">
    <property type="entry name" value="OUT AT FIRST PROTEIN HOMOLOG"/>
    <property type="match status" value="1"/>
</dbReference>
<dbReference type="Pfam" id="PF22873">
    <property type="entry name" value="OAF_C"/>
    <property type="match status" value="1"/>
</dbReference>
<dbReference type="Pfam" id="PF14941">
    <property type="entry name" value="OAF_N"/>
    <property type="match status" value="1"/>
</dbReference>
<sequence length="305" mass="34468">MAYGAPQCAQHLPPIGTPTLRQRSVSCYHFFRHSRGFLWFVLCNLLLTPNISDAQLLINVQNQGGEVIQESITSNIGEDLITLEFQKTDGTLITQLIDFRNEVQILKALVLGEEERGQSQYQVMCFATKFNKGDFISSDAMAKLRQKNPHTIRTPEEDKGRETYTMSSWVQLNRSLPITRHLQSLCAEATDATYVRDVDLKAWAELPGSSISSLEAATEKFPDALSTRCNEVSSLWAPCLCTLETCIGWYPCGLKYCKGKSVGGDTSGTQQQQQQTNYRCGIKTCRKCTQFTYYVRQKQQCLWDE</sequence>
<evidence type="ECO:0000250" key="1"/>
<evidence type="ECO:0000305" key="2"/>
<accession>O18638</accession>
<gene>
    <name type="primary">oaf</name>
</gene>
<feature type="chain" id="PRO_0000058014" description="Out at first protein">
    <location>
        <begin position="1"/>
        <end position="305"/>
    </location>
</feature>
<reference key="1">
    <citation type="journal article" date="1996" name="Genes Dev.">
        <title>Promoter specificity mediates the independent regulation of neighboring genes.</title>
        <authorList>
            <person name="Merli C."/>
            <person name="Bergstrom D.E."/>
            <person name="Cygan J.A."/>
            <person name="Blackman R.K."/>
        </authorList>
    </citation>
    <scope>NUCLEOTIDE SEQUENCE [GENOMIC DNA]</scope>
</reference>
<protein>
    <recommendedName>
        <fullName>Out at first protein</fullName>
    </recommendedName>
</protein>
<name>OAF_DROVI</name>